<organism>
    <name type="scientific">Escherichia coli O8 (strain IAI1)</name>
    <dbReference type="NCBI Taxonomy" id="585034"/>
    <lineage>
        <taxon>Bacteria</taxon>
        <taxon>Pseudomonadati</taxon>
        <taxon>Pseudomonadota</taxon>
        <taxon>Gammaproteobacteria</taxon>
        <taxon>Enterobacterales</taxon>
        <taxon>Enterobacteriaceae</taxon>
        <taxon>Escherichia</taxon>
    </lineage>
</organism>
<proteinExistence type="inferred from homology"/>
<evidence type="ECO:0000255" key="1">
    <source>
        <dbReference type="HAMAP-Rule" id="MF_00238"/>
    </source>
</evidence>
<protein>
    <recommendedName>
        <fullName evidence="1">Cytidylate kinase</fullName>
        <shortName evidence="1">CK</shortName>
        <ecNumber evidence="1">2.7.4.25</ecNumber>
    </recommendedName>
    <alternativeName>
        <fullName evidence="1">Cytidine monophosphate kinase</fullName>
        <shortName evidence="1">CMP kinase</shortName>
    </alternativeName>
</protein>
<name>KCY_ECO8A</name>
<reference key="1">
    <citation type="journal article" date="2009" name="PLoS Genet.">
        <title>Organised genome dynamics in the Escherichia coli species results in highly diverse adaptive paths.</title>
        <authorList>
            <person name="Touchon M."/>
            <person name="Hoede C."/>
            <person name="Tenaillon O."/>
            <person name="Barbe V."/>
            <person name="Baeriswyl S."/>
            <person name="Bidet P."/>
            <person name="Bingen E."/>
            <person name="Bonacorsi S."/>
            <person name="Bouchier C."/>
            <person name="Bouvet O."/>
            <person name="Calteau A."/>
            <person name="Chiapello H."/>
            <person name="Clermont O."/>
            <person name="Cruveiller S."/>
            <person name="Danchin A."/>
            <person name="Diard M."/>
            <person name="Dossat C."/>
            <person name="Karoui M.E."/>
            <person name="Frapy E."/>
            <person name="Garry L."/>
            <person name="Ghigo J.M."/>
            <person name="Gilles A.M."/>
            <person name="Johnson J."/>
            <person name="Le Bouguenec C."/>
            <person name="Lescat M."/>
            <person name="Mangenot S."/>
            <person name="Martinez-Jehanne V."/>
            <person name="Matic I."/>
            <person name="Nassif X."/>
            <person name="Oztas S."/>
            <person name="Petit M.A."/>
            <person name="Pichon C."/>
            <person name="Rouy Z."/>
            <person name="Ruf C.S."/>
            <person name="Schneider D."/>
            <person name="Tourret J."/>
            <person name="Vacherie B."/>
            <person name="Vallenet D."/>
            <person name="Medigue C."/>
            <person name="Rocha E.P.C."/>
            <person name="Denamur E."/>
        </authorList>
    </citation>
    <scope>NUCLEOTIDE SEQUENCE [LARGE SCALE GENOMIC DNA]</scope>
    <source>
        <strain>IAI1</strain>
    </source>
</reference>
<gene>
    <name evidence="1" type="primary">cmk</name>
    <name type="ordered locus">ECIAI1_0951</name>
</gene>
<keyword id="KW-0067">ATP-binding</keyword>
<keyword id="KW-0963">Cytoplasm</keyword>
<keyword id="KW-0418">Kinase</keyword>
<keyword id="KW-0547">Nucleotide-binding</keyword>
<keyword id="KW-0808">Transferase</keyword>
<accession>B7M839</accession>
<dbReference type="EC" id="2.7.4.25" evidence="1"/>
<dbReference type="EMBL" id="CU928160">
    <property type="protein sequence ID" value="CAQ97815.1"/>
    <property type="molecule type" value="Genomic_DNA"/>
</dbReference>
<dbReference type="RefSeq" id="WP_000125016.1">
    <property type="nucleotide sequence ID" value="NC_011741.1"/>
</dbReference>
<dbReference type="SMR" id="B7M839"/>
<dbReference type="GeneID" id="93776507"/>
<dbReference type="KEGG" id="ecr:ECIAI1_0951"/>
<dbReference type="HOGENOM" id="CLU_079959_0_2_6"/>
<dbReference type="GO" id="GO:0005829">
    <property type="term" value="C:cytosol"/>
    <property type="evidence" value="ECO:0007669"/>
    <property type="project" value="TreeGrafter"/>
</dbReference>
<dbReference type="GO" id="GO:0005524">
    <property type="term" value="F:ATP binding"/>
    <property type="evidence" value="ECO:0007669"/>
    <property type="project" value="UniProtKB-UniRule"/>
</dbReference>
<dbReference type="GO" id="GO:0036430">
    <property type="term" value="F:CMP kinase activity"/>
    <property type="evidence" value="ECO:0007669"/>
    <property type="project" value="RHEA"/>
</dbReference>
<dbReference type="GO" id="GO:0036431">
    <property type="term" value="F:dCMP kinase activity"/>
    <property type="evidence" value="ECO:0007669"/>
    <property type="project" value="RHEA"/>
</dbReference>
<dbReference type="GO" id="GO:0015949">
    <property type="term" value="P:nucleobase-containing small molecule interconversion"/>
    <property type="evidence" value="ECO:0007669"/>
    <property type="project" value="TreeGrafter"/>
</dbReference>
<dbReference type="GO" id="GO:0006220">
    <property type="term" value="P:pyrimidine nucleotide metabolic process"/>
    <property type="evidence" value="ECO:0007669"/>
    <property type="project" value="UniProtKB-UniRule"/>
</dbReference>
<dbReference type="CDD" id="cd02020">
    <property type="entry name" value="CMPK"/>
    <property type="match status" value="1"/>
</dbReference>
<dbReference type="FunFam" id="3.40.50.300:FF:000262">
    <property type="entry name" value="Cytidylate kinase"/>
    <property type="match status" value="1"/>
</dbReference>
<dbReference type="Gene3D" id="3.40.50.300">
    <property type="entry name" value="P-loop containing nucleotide triphosphate hydrolases"/>
    <property type="match status" value="1"/>
</dbReference>
<dbReference type="HAMAP" id="MF_00238">
    <property type="entry name" value="Cytidyl_kinase_type1"/>
    <property type="match status" value="1"/>
</dbReference>
<dbReference type="InterPro" id="IPR003136">
    <property type="entry name" value="Cytidylate_kin"/>
</dbReference>
<dbReference type="InterPro" id="IPR011994">
    <property type="entry name" value="Cytidylate_kinase_dom"/>
</dbReference>
<dbReference type="InterPro" id="IPR027417">
    <property type="entry name" value="P-loop_NTPase"/>
</dbReference>
<dbReference type="NCBIfam" id="TIGR00017">
    <property type="entry name" value="cmk"/>
    <property type="match status" value="1"/>
</dbReference>
<dbReference type="PANTHER" id="PTHR21299:SF2">
    <property type="entry name" value="CYTIDYLATE KINASE"/>
    <property type="match status" value="1"/>
</dbReference>
<dbReference type="PANTHER" id="PTHR21299">
    <property type="entry name" value="CYTIDYLATE KINASE/PANTOATE-BETA-ALANINE LIGASE"/>
    <property type="match status" value="1"/>
</dbReference>
<dbReference type="Pfam" id="PF02224">
    <property type="entry name" value="Cytidylate_kin"/>
    <property type="match status" value="1"/>
</dbReference>
<dbReference type="SUPFAM" id="SSF52540">
    <property type="entry name" value="P-loop containing nucleoside triphosphate hydrolases"/>
    <property type="match status" value="1"/>
</dbReference>
<feature type="chain" id="PRO_1000119015" description="Cytidylate kinase">
    <location>
        <begin position="1"/>
        <end position="227"/>
    </location>
</feature>
<feature type="binding site" evidence="1">
    <location>
        <begin position="12"/>
        <end position="20"/>
    </location>
    <ligand>
        <name>ATP</name>
        <dbReference type="ChEBI" id="CHEBI:30616"/>
    </ligand>
</feature>
<comment type="catalytic activity">
    <reaction evidence="1">
        <text>CMP + ATP = CDP + ADP</text>
        <dbReference type="Rhea" id="RHEA:11600"/>
        <dbReference type="ChEBI" id="CHEBI:30616"/>
        <dbReference type="ChEBI" id="CHEBI:58069"/>
        <dbReference type="ChEBI" id="CHEBI:60377"/>
        <dbReference type="ChEBI" id="CHEBI:456216"/>
        <dbReference type="EC" id="2.7.4.25"/>
    </reaction>
</comment>
<comment type="catalytic activity">
    <reaction evidence="1">
        <text>dCMP + ATP = dCDP + ADP</text>
        <dbReference type="Rhea" id="RHEA:25094"/>
        <dbReference type="ChEBI" id="CHEBI:30616"/>
        <dbReference type="ChEBI" id="CHEBI:57566"/>
        <dbReference type="ChEBI" id="CHEBI:58593"/>
        <dbReference type="ChEBI" id="CHEBI:456216"/>
        <dbReference type="EC" id="2.7.4.25"/>
    </reaction>
</comment>
<comment type="subcellular location">
    <subcellularLocation>
        <location evidence="1">Cytoplasm</location>
    </subcellularLocation>
</comment>
<comment type="similarity">
    <text evidence="1">Belongs to the cytidylate kinase family. Type 1 subfamily.</text>
</comment>
<sequence>MTAIAPVITIDGPSGAGKGTLCKAMAEALQWHLLDSGAIYRVLALAALHHHVDVASEDALVPLASHLDVRFVSTNGNLEVILEGEDVSGEIRTQEVANAASQVAAFPRVREALLRRQRAFRELPGLIADGRDMGTVVFPDAPVKIFLDASSEERAHRRMLQLQEKGFSVNFERLLAEIKERDDRDRNRAVAPLVPAADALVLDSTTLSIEQVIEKALQYARQKLALA</sequence>